<feature type="chain" id="PRO_1000186245" description="Purine nucleoside phosphorylase DeoD-type">
    <location>
        <begin position="1"/>
        <end position="239"/>
    </location>
</feature>
<feature type="active site" description="Proton donor" evidence="2">
    <location>
        <position position="205"/>
    </location>
</feature>
<feature type="binding site" evidence="1">
    <location>
        <position position="5"/>
    </location>
    <ligand>
        <name>a purine D-ribonucleoside</name>
        <dbReference type="ChEBI" id="CHEBI:142355"/>
        <note>ligand shared between dimeric partners</note>
    </ligand>
</feature>
<feature type="binding site" description="in other chain" evidence="1">
    <location>
        <position position="21"/>
    </location>
    <ligand>
        <name>phosphate</name>
        <dbReference type="ChEBI" id="CHEBI:43474"/>
        <note>ligand shared between dimeric partners</note>
    </ligand>
</feature>
<feature type="binding site" description="in other chain" evidence="1">
    <location>
        <position position="25"/>
    </location>
    <ligand>
        <name>phosphate</name>
        <dbReference type="ChEBI" id="CHEBI:43474"/>
        <note>ligand shared between dimeric partners</note>
    </ligand>
</feature>
<feature type="binding site" evidence="1">
    <location>
        <position position="44"/>
    </location>
    <ligand>
        <name>phosphate</name>
        <dbReference type="ChEBI" id="CHEBI:43474"/>
        <note>ligand shared between dimeric partners</note>
    </ligand>
</feature>
<feature type="binding site" description="in other chain" evidence="1">
    <location>
        <begin position="88"/>
        <end position="91"/>
    </location>
    <ligand>
        <name>phosphate</name>
        <dbReference type="ChEBI" id="CHEBI:43474"/>
        <note>ligand shared between dimeric partners</note>
    </ligand>
</feature>
<feature type="binding site" description="in other chain" evidence="1">
    <location>
        <begin position="180"/>
        <end position="182"/>
    </location>
    <ligand>
        <name>a purine D-ribonucleoside</name>
        <dbReference type="ChEBI" id="CHEBI:142355"/>
        <note>ligand shared between dimeric partners</note>
    </ligand>
</feature>
<feature type="binding site" description="in other chain" evidence="1">
    <location>
        <begin position="204"/>
        <end position="205"/>
    </location>
    <ligand>
        <name>a purine D-ribonucleoside</name>
        <dbReference type="ChEBI" id="CHEBI:142355"/>
        <note>ligand shared between dimeric partners</note>
    </ligand>
</feature>
<feature type="site" description="Important for catalytic activity" evidence="2">
    <location>
        <position position="218"/>
    </location>
</feature>
<feature type="strand" evidence="3">
    <location>
        <begin position="15"/>
        <end position="19"/>
    </location>
</feature>
<feature type="helix" evidence="3">
    <location>
        <begin position="23"/>
        <end position="33"/>
    </location>
</feature>
<feature type="strand" evidence="3">
    <location>
        <begin position="35"/>
        <end position="41"/>
    </location>
</feature>
<feature type="helix" evidence="3">
    <location>
        <begin position="43"/>
        <end position="45"/>
    </location>
</feature>
<feature type="strand" evidence="3">
    <location>
        <begin position="48"/>
        <end position="53"/>
    </location>
</feature>
<feature type="strand" evidence="3">
    <location>
        <begin position="56"/>
        <end position="61"/>
    </location>
</feature>
<feature type="helix" evidence="3">
    <location>
        <begin position="67"/>
        <end position="81"/>
    </location>
</feature>
<feature type="strand" evidence="3">
    <location>
        <begin position="85"/>
        <end position="94"/>
    </location>
</feature>
<feature type="strand" evidence="3">
    <location>
        <begin position="104"/>
        <end position="113"/>
    </location>
</feature>
<feature type="helix" evidence="3">
    <location>
        <begin position="116"/>
        <end position="120"/>
    </location>
</feature>
<feature type="turn" evidence="3">
    <location>
        <begin position="121"/>
        <end position="123"/>
    </location>
</feature>
<feature type="helix" evidence="3">
    <location>
        <begin position="132"/>
        <end position="145"/>
    </location>
</feature>
<feature type="strand" evidence="3">
    <location>
        <begin position="149"/>
        <end position="156"/>
    </location>
</feature>
<feature type="helix" evidence="3">
    <location>
        <begin position="167"/>
        <end position="173"/>
    </location>
</feature>
<feature type="strand" evidence="3">
    <location>
        <begin position="178"/>
        <end position="182"/>
    </location>
</feature>
<feature type="helix" evidence="3">
    <location>
        <begin position="183"/>
        <end position="193"/>
    </location>
</feature>
<feature type="strand" evidence="3">
    <location>
        <begin position="196"/>
        <end position="206"/>
    </location>
</feature>
<feature type="turn" evidence="3">
    <location>
        <begin position="207"/>
        <end position="209"/>
    </location>
</feature>
<feature type="helix" evidence="3">
    <location>
        <begin position="215"/>
        <end position="220"/>
    </location>
</feature>
<feature type="helix" evidence="3">
    <location>
        <begin position="224"/>
        <end position="237"/>
    </location>
</feature>
<sequence length="239" mass="25936">MATPHINAEMGDFADVVLMPGDPLRAKFIAETFLQDVREVNNVRGMLGFTGTYKGRKISVMGHGMGIPSCSIYAKELITDFGVKKIIRVGSCGAVRTDVKLRDVVIGMGACTDSKVNRMRFKDHDYAAIADFEMTRNAVDAAKAKGVNVRVGNLFSADLFYTPDPQMFDVMEKYGILGVEMEAAGIYGVAAEFGAKALTICTVSDHIRTGEQTTAAERQTTFNDMIEIALESVLLGDNA</sequence>
<name>DEOD_YERPY</name>
<organism>
    <name type="scientific">Yersinia pseudotuberculosis serotype O:3 (strain YPIII)</name>
    <dbReference type="NCBI Taxonomy" id="502800"/>
    <lineage>
        <taxon>Bacteria</taxon>
        <taxon>Pseudomonadati</taxon>
        <taxon>Pseudomonadota</taxon>
        <taxon>Gammaproteobacteria</taxon>
        <taxon>Enterobacterales</taxon>
        <taxon>Yersiniaceae</taxon>
        <taxon>Yersinia</taxon>
    </lineage>
</organism>
<comment type="function">
    <text evidence="2">Catalyzes the reversible phosphorolytic breakdown of the N-glycosidic bond in the beta-(deoxy)ribonucleoside molecules, with the formation of the corresponding free purine bases and pentose-1-phosphate.</text>
</comment>
<comment type="catalytic activity">
    <reaction evidence="2">
        <text>a purine D-ribonucleoside + phosphate = a purine nucleobase + alpha-D-ribose 1-phosphate</text>
        <dbReference type="Rhea" id="RHEA:19805"/>
        <dbReference type="ChEBI" id="CHEBI:26386"/>
        <dbReference type="ChEBI" id="CHEBI:43474"/>
        <dbReference type="ChEBI" id="CHEBI:57720"/>
        <dbReference type="ChEBI" id="CHEBI:142355"/>
        <dbReference type="EC" id="2.4.2.1"/>
    </reaction>
</comment>
<comment type="catalytic activity">
    <reaction evidence="2">
        <text>a purine 2'-deoxy-D-ribonucleoside + phosphate = a purine nucleobase + 2-deoxy-alpha-D-ribose 1-phosphate</text>
        <dbReference type="Rhea" id="RHEA:36431"/>
        <dbReference type="ChEBI" id="CHEBI:26386"/>
        <dbReference type="ChEBI" id="CHEBI:43474"/>
        <dbReference type="ChEBI" id="CHEBI:57259"/>
        <dbReference type="ChEBI" id="CHEBI:142361"/>
        <dbReference type="EC" id="2.4.2.1"/>
    </reaction>
</comment>
<comment type="subunit">
    <text evidence="2">Homohexamer; trimer of homodimers.</text>
</comment>
<comment type="similarity">
    <text evidence="2">Belongs to the PNP/UDP phosphorylase family.</text>
</comment>
<gene>
    <name evidence="2" type="primary">deoD</name>
    <name type="ordered locus">YPK_3624</name>
</gene>
<protein>
    <recommendedName>
        <fullName evidence="2">Purine nucleoside phosphorylase DeoD-type</fullName>
        <shortName evidence="2">PNP</shortName>
        <ecNumber evidence="2">2.4.2.1</ecNumber>
    </recommendedName>
</protein>
<dbReference type="EC" id="2.4.2.1" evidence="2"/>
<dbReference type="EMBL" id="CP000950">
    <property type="protein sequence ID" value="ACA69891.1"/>
    <property type="molecule type" value="Genomic_DNA"/>
</dbReference>
<dbReference type="RefSeq" id="WP_011191689.1">
    <property type="nucleotide sequence ID" value="NZ_CP009792.1"/>
</dbReference>
<dbReference type="PDB" id="3OCC">
    <property type="method" value="X-ray"/>
    <property type="resolution" value="1.70 A"/>
    <property type="chains" value="A/B/C/D/E/F=1-239"/>
</dbReference>
<dbReference type="PDBsum" id="3OCC"/>
<dbReference type="SMR" id="B1JL34"/>
<dbReference type="GeneID" id="49787416"/>
<dbReference type="KEGG" id="ypy:YPK_3624"/>
<dbReference type="PATRIC" id="fig|502800.11.peg.4376"/>
<dbReference type="EvolutionaryTrace" id="B1JL34"/>
<dbReference type="GO" id="GO:0005829">
    <property type="term" value="C:cytosol"/>
    <property type="evidence" value="ECO:0007669"/>
    <property type="project" value="TreeGrafter"/>
</dbReference>
<dbReference type="GO" id="GO:0004731">
    <property type="term" value="F:purine-nucleoside phosphorylase activity"/>
    <property type="evidence" value="ECO:0007669"/>
    <property type="project" value="UniProtKB-UniRule"/>
</dbReference>
<dbReference type="GO" id="GO:0006152">
    <property type="term" value="P:purine nucleoside catabolic process"/>
    <property type="evidence" value="ECO:0007669"/>
    <property type="project" value="TreeGrafter"/>
</dbReference>
<dbReference type="CDD" id="cd09006">
    <property type="entry name" value="PNP_EcPNPI-like"/>
    <property type="match status" value="1"/>
</dbReference>
<dbReference type="FunFam" id="3.40.50.1580:FF:000002">
    <property type="entry name" value="Purine nucleoside phosphorylase DeoD-type"/>
    <property type="match status" value="1"/>
</dbReference>
<dbReference type="Gene3D" id="3.40.50.1580">
    <property type="entry name" value="Nucleoside phosphorylase domain"/>
    <property type="match status" value="1"/>
</dbReference>
<dbReference type="HAMAP" id="MF_01627">
    <property type="entry name" value="Pur_nucleosid_phosp"/>
    <property type="match status" value="1"/>
</dbReference>
<dbReference type="InterPro" id="IPR004402">
    <property type="entry name" value="DeoD-type"/>
</dbReference>
<dbReference type="InterPro" id="IPR018016">
    <property type="entry name" value="Nucleoside_phosphorylase_CS"/>
</dbReference>
<dbReference type="InterPro" id="IPR000845">
    <property type="entry name" value="Nucleoside_phosphorylase_d"/>
</dbReference>
<dbReference type="InterPro" id="IPR035994">
    <property type="entry name" value="Nucleoside_phosphorylase_sf"/>
</dbReference>
<dbReference type="NCBIfam" id="TIGR00107">
    <property type="entry name" value="deoD"/>
    <property type="match status" value="1"/>
</dbReference>
<dbReference type="NCBIfam" id="NF004489">
    <property type="entry name" value="PRK05819.1"/>
    <property type="match status" value="1"/>
</dbReference>
<dbReference type="NCBIfam" id="NF009914">
    <property type="entry name" value="PRK13374.1"/>
    <property type="match status" value="1"/>
</dbReference>
<dbReference type="PANTHER" id="PTHR43691:SF2">
    <property type="entry name" value="PURINE NUCLEOSIDE PHOSPHORYLASE DEOD-TYPE"/>
    <property type="match status" value="1"/>
</dbReference>
<dbReference type="PANTHER" id="PTHR43691">
    <property type="entry name" value="URIDINE PHOSPHORYLASE"/>
    <property type="match status" value="1"/>
</dbReference>
<dbReference type="Pfam" id="PF01048">
    <property type="entry name" value="PNP_UDP_1"/>
    <property type="match status" value="1"/>
</dbReference>
<dbReference type="SUPFAM" id="SSF53167">
    <property type="entry name" value="Purine and uridine phosphorylases"/>
    <property type="match status" value="1"/>
</dbReference>
<dbReference type="PROSITE" id="PS01232">
    <property type="entry name" value="PNP_UDP_1"/>
    <property type="match status" value="1"/>
</dbReference>
<accession>B1JL34</accession>
<keyword id="KW-0002">3D-structure</keyword>
<keyword id="KW-0328">Glycosyltransferase</keyword>
<keyword id="KW-0808">Transferase</keyword>
<evidence type="ECO:0000250" key="1">
    <source>
        <dbReference type="UniProtKB" id="P50389"/>
    </source>
</evidence>
<evidence type="ECO:0000255" key="2">
    <source>
        <dbReference type="HAMAP-Rule" id="MF_01627"/>
    </source>
</evidence>
<evidence type="ECO:0007829" key="3">
    <source>
        <dbReference type="PDB" id="3OCC"/>
    </source>
</evidence>
<reference key="1">
    <citation type="submission" date="2008-02" db="EMBL/GenBank/DDBJ databases">
        <title>Complete sequence of Yersinia pseudotuberculosis YPIII.</title>
        <authorList>
            <consortium name="US DOE Joint Genome Institute"/>
            <person name="Copeland A."/>
            <person name="Lucas S."/>
            <person name="Lapidus A."/>
            <person name="Glavina del Rio T."/>
            <person name="Dalin E."/>
            <person name="Tice H."/>
            <person name="Bruce D."/>
            <person name="Goodwin L."/>
            <person name="Pitluck S."/>
            <person name="Munk A.C."/>
            <person name="Brettin T."/>
            <person name="Detter J.C."/>
            <person name="Han C."/>
            <person name="Tapia R."/>
            <person name="Schmutz J."/>
            <person name="Larimer F."/>
            <person name="Land M."/>
            <person name="Hauser L."/>
            <person name="Challacombe J.F."/>
            <person name="Green L."/>
            <person name="Lindler L.E."/>
            <person name="Nikolich M.P."/>
            <person name="Richardson P."/>
        </authorList>
    </citation>
    <scope>NUCLEOTIDE SEQUENCE [LARGE SCALE GENOMIC DNA]</scope>
    <source>
        <strain>YPIII</strain>
    </source>
</reference>
<proteinExistence type="evidence at protein level"/>